<gene>
    <name evidence="2" type="primary">rpsL</name>
    <name type="ordered locus">Cag_1856</name>
</gene>
<proteinExistence type="inferred from homology"/>
<name>RS12_CHLCH</name>
<protein>
    <recommendedName>
        <fullName evidence="2">Small ribosomal subunit protein uS12</fullName>
    </recommendedName>
    <alternativeName>
        <fullName evidence="4">30S ribosomal protein S12</fullName>
    </alternativeName>
</protein>
<comment type="function">
    <text evidence="2">With S4 and S5 plays an important role in translational accuracy.</text>
</comment>
<comment type="function">
    <text evidence="2">Interacts with and stabilizes bases of the 16S rRNA that are involved in tRNA selection in the A site and with the mRNA backbone. Located at the interface of the 30S and 50S subunits, it traverses the body of the 30S subunit contacting proteins on the other side and probably holding the rRNA structure together. The combined cluster of proteins S8, S12 and S17 appears to hold together the shoulder and platform of the 30S subunit.</text>
</comment>
<comment type="subunit">
    <text evidence="2">Part of the 30S ribosomal subunit. Contacts proteins S8 and S17. May interact with IF1 in the 30S initiation complex.</text>
</comment>
<comment type="similarity">
    <text evidence="2">Belongs to the universal ribosomal protein uS12 family.</text>
</comment>
<evidence type="ECO:0000250" key="1"/>
<evidence type="ECO:0000255" key="2">
    <source>
        <dbReference type="HAMAP-Rule" id="MF_00403"/>
    </source>
</evidence>
<evidence type="ECO:0000256" key="3">
    <source>
        <dbReference type="SAM" id="MobiDB-lite"/>
    </source>
</evidence>
<evidence type="ECO:0000305" key="4"/>
<organism>
    <name type="scientific">Chlorobium chlorochromatii (strain CaD3)</name>
    <dbReference type="NCBI Taxonomy" id="340177"/>
    <lineage>
        <taxon>Bacteria</taxon>
        <taxon>Pseudomonadati</taxon>
        <taxon>Chlorobiota</taxon>
        <taxon>Chlorobiia</taxon>
        <taxon>Chlorobiales</taxon>
        <taxon>Chlorobiaceae</taxon>
        <taxon>Chlorobium/Pelodictyon group</taxon>
        <taxon>Chlorobium</taxon>
    </lineage>
</organism>
<reference key="1">
    <citation type="submission" date="2005-08" db="EMBL/GenBank/DDBJ databases">
        <title>Complete sequence of Chlorobium chlorochromatii CaD3.</title>
        <authorList>
            <consortium name="US DOE Joint Genome Institute"/>
            <person name="Copeland A."/>
            <person name="Lucas S."/>
            <person name="Lapidus A."/>
            <person name="Barry K."/>
            <person name="Detter J.C."/>
            <person name="Glavina T."/>
            <person name="Hammon N."/>
            <person name="Israni S."/>
            <person name="Pitluck S."/>
            <person name="Bryant D."/>
            <person name="Schmutz J."/>
            <person name="Larimer F."/>
            <person name="Land M."/>
            <person name="Kyrpides N."/>
            <person name="Ivanova N."/>
            <person name="Richardson P."/>
        </authorList>
    </citation>
    <scope>NUCLEOTIDE SEQUENCE [LARGE SCALE GENOMIC DNA]</scope>
    <source>
        <strain>CaD3</strain>
    </source>
</reference>
<keyword id="KW-0488">Methylation</keyword>
<keyword id="KW-0687">Ribonucleoprotein</keyword>
<keyword id="KW-0689">Ribosomal protein</keyword>
<keyword id="KW-0694">RNA-binding</keyword>
<keyword id="KW-0699">rRNA-binding</keyword>
<keyword id="KW-0820">tRNA-binding</keyword>
<dbReference type="EMBL" id="CP000108">
    <property type="protein sequence ID" value="ABB29107.1"/>
    <property type="molecule type" value="Genomic_DNA"/>
</dbReference>
<dbReference type="SMR" id="Q3APG8"/>
<dbReference type="STRING" id="340177.Cag_1856"/>
<dbReference type="KEGG" id="cch:Cag_1856"/>
<dbReference type="eggNOG" id="COG0048">
    <property type="taxonomic scope" value="Bacteria"/>
</dbReference>
<dbReference type="HOGENOM" id="CLU_104295_1_2_10"/>
<dbReference type="OrthoDB" id="9802366at2"/>
<dbReference type="GO" id="GO:0015935">
    <property type="term" value="C:small ribosomal subunit"/>
    <property type="evidence" value="ECO:0007669"/>
    <property type="project" value="InterPro"/>
</dbReference>
<dbReference type="GO" id="GO:0019843">
    <property type="term" value="F:rRNA binding"/>
    <property type="evidence" value="ECO:0007669"/>
    <property type="project" value="UniProtKB-UniRule"/>
</dbReference>
<dbReference type="GO" id="GO:0003735">
    <property type="term" value="F:structural constituent of ribosome"/>
    <property type="evidence" value="ECO:0007669"/>
    <property type="project" value="InterPro"/>
</dbReference>
<dbReference type="GO" id="GO:0000049">
    <property type="term" value="F:tRNA binding"/>
    <property type="evidence" value="ECO:0007669"/>
    <property type="project" value="UniProtKB-UniRule"/>
</dbReference>
<dbReference type="GO" id="GO:0006412">
    <property type="term" value="P:translation"/>
    <property type="evidence" value="ECO:0007669"/>
    <property type="project" value="UniProtKB-UniRule"/>
</dbReference>
<dbReference type="CDD" id="cd03368">
    <property type="entry name" value="Ribosomal_S12"/>
    <property type="match status" value="1"/>
</dbReference>
<dbReference type="FunFam" id="2.40.50.140:FF:000001">
    <property type="entry name" value="30S ribosomal protein S12"/>
    <property type="match status" value="1"/>
</dbReference>
<dbReference type="Gene3D" id="2.40.50.140">
    <property type="entry name" value="Nucleic acid-binding proteins"/>
    <property type="match status" value="1"/>
</dbReference>
<dbReference type="HAMAP" id="MF_00403_B">
    <property type="entry name" value="Ribosomal_uS12_B"/>
    <property type="match status" value="1"/>
</dbReference>
<dbReference type="InterPro" id="IPR012340">
    <property type="entry name" value="NA-bd_OB-fold"/>
</dbReference>
<dbReference type="InterPro" id="IPR006032">
    <property type="entry name" value="Ribosomal_uS12"/>
</dbReference>
<dbReference type="InterPro" id="IPR005679">
    <property type="entry name" value="Ribosomal_uS12_bac"/>
</dbReference>
<dbReference type="NCBIfam" id="TIGR00981">
    <property type="entry name" value="rpsL_bact"/>
    <property type="match status" value="1"/>
</dbReference>
<dbReference type="PANTHER" id="PTHR11652">
    <property type="entry name" value="30S RIBOSOMAL PROTEIN S12 FAMILY MEMBER"/>
    <property type="match status" value="1"/>
</dbReference>
<dbReference type="Pfam" id="PF00164">
    <property type="entry name" value="Ribosom_S12_S23"/>
    <property type="match status" value="1"/>
</dbReference>
<dbReference type="PIRSF" id="PIRSF002133">
    <property type="entry name" value="Ribosomal_S12/S23"/>
    <property type="match status" value="1"/>
</dbReference>
<dbReference type="PRINTS" id="PR01034">
    <property type="entry name" value="RIBOSOMALS12"/>
</dbReference>
<dbReference type="SUPFAM" id="SSF50249">
    <property type="entry name" value="Nucleic acid-binding proteins"/>
    <property type="match status" value="1"/>
</dbReference>
<dbReference type="PROSITE" id="PS00055">
    <property type="entry name" value="RIBOSOMAL_S12"/>
    <property type="match status" value="1"/>
</dbReference>
<accession>Q3APG8</accession>
<sequence>MPTIQQLIRLGRSVKVSKTASPALEKCPQKRGVCTRVYTTTPKKPNSALRKVARVRLSNKVEVTAYIPGEGHNLQEHSIVLIRGGRVKDLPGVRYHIVRGSLDTSGVADRKQSRSKYGAKQPKAGAPAAPVKGKGKK</sequence>
<feature type="chain" id="PRO_0000226384" description="Small ribosomal subunit protein uS12">
    <location>
        <begin position="1"/>
        <end position="137"/>
    </location>
</feature>
<feature type="region of interest" description="Disordered" evidence="3">
    <location>
        <begin position="101"/>
        <end position="137"/>
    </location>
</feature>
<feature type="compositionally biased region" description="Low complexity" evidence="3">
    <location>
        <begin position="116"/>
        <end position="137"/>
    </location>
</feature>
<feature type="modified residue" description="3-methylthioaspartic acid" evidence="1">
    <location>
        <position position="89"/>
    </location>
</feature>